<sequence>MAAASSSRVLLAAVAVLAAALAGCGAGAALDDPAGLLRRAKEAEFAGWMVGLRRRIHENPELGYEEFATSELVRRELDALGIPYRHPFAVTGVVATVGTGGPPFVALRADMDALPMQESVEWEHKSKVPGKMHGCGHDAHVAMLLGSARILQEHRDELKGTVVLVFQPAEEGGGGAKKMIDDGTVENIEAIFGVHVADVVPIGVVASRPGPVMAGSGFFEAVISGKGGHAALPHHTIDPILAASNVIVSLQQLVSREADPLDSQVVTVGKFQGGGAFNVIPDSVTIGGTFRAFLKESFNQLKQRIEEVIVSQASVQRCNAVVDFLDKDRPFFPPTINSAGLHDFFVKVASEMVGPKNVRDKQPLMGAEDFAFYADAIPATYYYFLGMYNETRGPQAPHHSPYFTINEDALPYGAALQASLATRYLLEHQPPTTGKAKAHDEL</sequence>
<proteinExistence type="evidence at transcript level"/>
<protein>
    <recommendedName>
        <fullName>IAA-amino acid hydrolase ILR1-like 1</fullName>
        <ecNumber>3.5.1.-</ecNumber>
    </recommendedName>
</protein>
<gene>
    <name type="primary">ILL1</name>
    <name type="synonym">IAR</name>
    <name type="ORF">OsI_002388</name>
</gene>
<organism>
    <name type="scientific">Oryza sativa subsp. indica</name>
    <name type="common">Rice</name>
    <dbReference type="NCBI Taxonomy" id="39946"/>
    <lineage>
        <taxon>Eukaryota</taxon>
        <taxon>Viridiplantae</taxon>
        <taxon>Streptophyta</taxon>
        <taxon>Embryophyta</taxon>
        <taxon>Tracheophyta</taxon>
        <taxon>Spermatophyta</taxon>
        <taxon>Magnoliopsida</taxon>
        <taxon>Liliopsida</taxon>
        <taxon>Poales</taxon>
        <taxon>Poaceae</taxon>
        <taxon>BOP clade</taxon>
        <taxon>Oryzoideae</taxon>
        <taxon>Oryzeae</taxon>
        <taxon>Oryzinae</taxon>
        <taxon>Oryza</taxon>
        <taxon>Oryza sativa</taxon>
    </lineage>
</organism>
<evidence type="ECO:0000250" key="1"/>
<evidence type="ECO:0000255" key="2"/>
<evidence type="ECO:0000255" key="3">
    <source>
        <dbReference type="PROSITE-ProRule" id="PRU10138"/>
    </source>
</evidence>
<evidence type="ECO:0000305" key="4"/>
<keyword id="KW-0256">Endoplasmic reticulum</keyword>
<keyword id="KW-0378">Hydrolase</keyword>
<keyword id="KW-1185">Reference proteome</keyword>
<keyword id="KW-0732">Signal</keyword>
<reference key="1">
    <citation type="submission" date="2002-11" db="EMBL/GenBank/DDBJ databases">
        <title>Isolation and chararcterization of a putative IAR in rice.</title>
        <authorList>
            <person name="Lin C.F."/>
            <person name="Yang J.S."/>
        </authorList>
    </citation>
    <scope>NUCLEOTIDE SEQUENCE [MRNA]</scope>
</reference>
<reference key="2">
    <citation type="journal article" date="2005" name="PLoS Biol.">
        <title>The genomes of Oryza sativa: a history of duplications.</title>
        <authorList>
            <person name="Yu J."/>
            <person name="Wang J."/>
            <person name="Lin W."/>
            <person name="Li S."/>
            <person name="Li H."/>
            <person name="Zhou J."/>
            <person name="Ni P."/>
            <person name="Dong W."/>
            <person name="Hu S."/>
            <person name="Zeng C."/>
            <person name="Zhang J."/>
            <person name="Zhang Y."/>
            <person name="Li R."/>
            <person name="Xu Z."/>
            <person name="Li S."/>
            <person name="Li X."/>
            <person name="Zheng H."/>
            <person name="Cong L."/>
            <person name="Lin L."/>
            <person name="Yin J."/>
            <person name="Geng J."/>
            <person name="Li G."/>
            <person name="Shi J."/>
            <person name="Liu J."/>
            <person name="Lv H."/>
            <person name="Li J."/>
            <person name="Wang J."/>
            <person name="Deng Y."/>
            <person name="Ran L."/>
            <person name="Shi X."/>
            <person name="Wang X."/>
            <person name="Wu Q."/>
            <person name="Li C."/>
            <person name="Ren X."/>
            <person name="Wang J."/>
            <person name="Wang X."/>
            <person name="Li D."/>
            <person name="Liu D."/>
            <person name="Zhang X."/>
            <person name="Ji Z."/>
            <person name="Zhao W."/>
            <person name="Sun Y."/>
            <person name="Zhang Z."/>
            <person name="Bao J."/>
            <person name="Han Y."/>
            <person name="Dong L."/>
            <person name="Ji J."/>
            <person name="Chen P."/>
            <person name="Wu S."/>
            <person name="Liu J."/>
            <person name="Xiao Y."/>
            <person name="Bu D."/>
            <person name="Tan J."/>
            <person name="Yang L."/>
            <person name="Ye C."/>
            <person name="Zhang J."/>
            <person name="Xu J."/>
            <person name="Zhou Y."/>
            <person name="Yu Y."/>
            <person name="Zhang B."/>
            <person name="Zhuang S."/>
            <person name="Wei H."/>
            <person name="Liu B."/>
            <person name="Lei M."/>
            <person name="Yu H."/>
            <person name="Li Y."/>
            <person name="Xu H."/>
            <person name="Wei S."/>
            <person name="He X."/>
            <person name="Fang L."/>
            <person name="Zhang Z."/>
            <person name="Zhang Y."/>
            <person name="Huang X."/>
            <person name="Su Z."/>
            <person name="Tong W."/>
            <person name="Li J."/>
            <person name="Tong Z."/>
            <person name="Li S."/>
            <person name="Ye J."/>
            <person name="Wang L."/>
            <person name="Fang L."/>
            <person name="Lei T."/>
            <person name="Chen C.-S."/>
            <person name="Chen H.-C."/>
            <person name="Xu Z."/>
            <person name="Li H."/>
            <person name="Huang H."/>
            <person name="Zhang F."/>
            <person name="Xu H."/>
            <person name="Li N."/>
            <person name="Zhao C."/>
            <person name="Li S."/>
            <person name="Dong L."/>
            <person name="Huang Y."/>
            <person name="Li L."/>
            <person name="Xi Y."/>
            <person name="Qi Q."/>
            <person name="Li W."/>
            <person name="Zhang B."/>
            <person name="Hu W."/>
            <person name="Zhang Y."/>
            <person name="Tian X."/>
            <person name="Jiao Y."/>
            <person name="Liang X."/>
            <person name="Jin J."/>
            <person name="Gao L."/>
            <person name="Zheng W."/>
            <person name="Hao B."/>
            <person name="Liu S.-M."/>
            <person name="Wang W."/>
            <person name="Yuan L."/>
            <person name="Cao M."/>
            <person name="McDermott J."/>
            <person name="Samudrala R."/>
            <person name="Wang J."/>
            <person name="Wong G.K.-S."/>
            <person name="Yang H."/>
        </authorList>
    </citation>
    <scope>NUCLEOTIDE SEQUENCE [LARGE SCALE GENOMIC DNA]</scope>
    <source>
        <strain>cv. 93-11</strain>
    </source>
</reference>
<comment type="function">
    <text evidence="1">Hydrolyzes certain amino acid conjugates of the plant growth regulator indole-3-acetic acid (IAA).</text>
</comment>
<comment type="subcellular location">
    <subcellularLocation>
        <location evidence="3">Endoplasmic reticulum lumen</location>
    </subcellularLocation>
</comment>
<comment type="similarity">
    <text evidence="4">Belongs to the peptidase M20 family.</text>
</comment>
<name>ILL1_ORYSI</name>
<accession>Q84XG9</accession>
<feature type="signal peptide" evidence="2">
    <location>
        <begin position="1"/>
        <end position="27"/>
    </location>
</feature>
<feature type="chain" id="PRO_0000351637" description="IAA-amino acid hydrolase ILR1-like 1">
    <location>
        <begin position="28"/>
        <end position="442"/>
    </location>
</feature>
<feature type="short sequence motif" description="Prevents secretion from ER" evidence="3">
    <location>
        <begin position="439"/>
        <end position="442"/>
    </location>
</feature>
<dbReference type="EC" id="3.5.1.-"/>
<dbReference type="EMBL" id="AY187620">
    <property type="protein sequence ID" value="AAO25632.1"/>
    <property type="molecule type" value="mRNA"/>
</dbReference>
<dbReference type="EMBL" id="CM000126">
    <property type="protein sequence ID" value="EAY74541.1"/>
    <property type="molecule type" value="Genomic_DNA"/>
</dbReference>
<dbReference type="SMR" id="Q84XG9"/>
<dbReference type="STRING" id="39946.Q84XG9"/>
<dbReference type="MEROPS" id="M20.014"/>
<dbReference type="EnsemblPlants" id="BGIOSGA001413-TA">
    <property type="protein sequence ID" value="BGIOSGA001413-PA"/>
    <property type="gene ID" value="BGIOSGA001413"/>
</dbReference>
<dbReference type="EnsemblPlants" id="OsGoSa_01g0021020.01">
    <property type="protein sequence ID" value="OsGoSa_01g0021020.01"/>
    <property type="gene ID" value="OsGoSa_01g0021020"/>
</dbReference>
<dbReference type="EnsemblPlants" id="OsIR64_01g0020760.01">
    <property type="protein sequence ID" value="OsIR64_01g0020760.01"/>
    <property type="gene ID" value="OsIR64_01g0020760"/>
</dbReference>
<dbReference type="EnsemblPlants" id="OsKYG_01g0020780.01">
    <property type="protein sequence ID" value="OsKYG_01g0020780.01"/>
    <property type="gene ID" value="OsKYG_01g0020780"/>
</dbReference>
<dbReference type="EnsemblPlants" id="OsLima_01g0020880.01">
    <property type="protein sequence ID" value="OsLima_01g0020880.01"/>
    <property type="gene ID" value="OsLima_01g0020880"/>
</dbReference>
<dbReference type="EnsemblPlants" id="OsLiXu_01g0020960.01">
    <property type="protein sequence ID" value="OsLiXu_01g0020960.01"/>
    <property type="gene ID" value="OsLiXu_01g0020960"/>
</dbReference>
<dbReference type="EnsemblPlants" id="OsMH63_01G021450_01">
    <property type="protein sequence ID" value="OsMH63_01G021450_01"/>
    <property type="gene ID" value="OsMH63_01G021450"/>
</dbReference>
<dbReference type="EnsemblPlants" id="OsPr106_01g0020790.01">
    <property type="protein sequence ID" value="OsPr106_01g0020790.01"/>
    <property type="gene ID" value="OsPr106_01g0020790"/>
</dbReference>
<dbReference type="EnsemblPlants" id="OsZS97_01G020710_01">
    <property type="protein sequence ID" value="OsZS97_01G020710_01"/>
    <property type="gene ID" value="OsZS97_01G020710"/>
</dbReference>
<dbReference type="Gramene" id="BGIOSGA001413-TA">
    <property type="protein sequence ID" value="BGIOSGA001413-PA"/>
    <property type="gene ID" value="BGIOSGA001413"/>
</dbReference>
<dbReference type="Gramene" id="OsGoSa_01g0021020.01">
    <property type="protein sequence ID" value="OsGoSa_01g0021020.01"/>
    <property type="gene ID" value="OsGoSa_01g0021020"/>
</dbReference>
<dbReference type="Gramene" id="OsIR64_01g0020760.01">
    <property type="protein sequence ID" value="OsIR64_01g0020760.01"/>
    <property type="gene ID" value="OsIR64_01g0020760"/>
</dbReference>
<dbReference type="Gramene" id="OsKYG_01g0020780.01">
    <property type="protein sequence ID" value="OsKYG_01g0020780.01"/>
    <property type="gene ID" value="OsKYG_01g0020780"/>
</dbReference>
<dbReference type="Gramene" id="OsLima_01g0020880.01">
    <property type="protein sequence ID" value="OsLima_01g0020880.01"/>
    <property type="gene ID" value="OsLima_01g0020880"/>
</dbReference>
<dbReference type="Gramene" id="OsLiXu_01g0020960.01">
    <property type="protein sequence ID" value="OsLiXu_01g0020960.01"/>
    <property type="gene ID" value="OsLiXu_01g0020960"/>
</dbReference>
<dbReference type="Gramene" id="OsMH63_01G021450_01">
    <property type="protein sequence ID" value="OsMH63_01G021450_01"/>
    <property type="gene ID" value="OsMH63_01G021450"/>
</dbReference>
<dbReference type="Gramene" id="OsPr106_01g0020790.01">
    <property type="protein sequence ID" value="OsPr106_01g0020790.01"/>
    <property type="gene ID" value="OsPr106_01g0020790"/>
</dbReference>
<dbReference type="Gramene" id="OsZS97_01G020710_01">
    <property type="protein sequence ID" value="OsZS97_01G020710_01"/>
    <property type="gene ID" value="OsZS97_01G020710"/>
</dbReference>
<dbReference type="HOGENOM" id="CLU_023257_0_0_1"/>
<dbReference type="OMA" id="VNKGMMH"/>
<dbReference type="OrthoDB" id="6119954at2759"/>
<dbReference type="Proteomes" id="UP000007015">
    <property type="component" value="Chromosome 1"/>
</dbReference>
<dbReference type="GO" id="GO:0005788">
    <property type="term" value="C:endoplasmic reticulum lumen"/>
    <property type="evidence" value="ECO:0007669"/>
    <property type="project" value="UniProtKB-SubCell"/>
</dbReference>
<dbReference type="GO" id="GO:0010179">
    <property type="term" value="F:IAA-Ala conjugate hydrolase activity"/>
    <property type="evidence" value="ECO:0007669"/>
    <property type="project" value="TreeGrafter"/>
</dbReference>
<dbReference type="GO" id="GO:0009850">
    <property type="term" value="P:auxin metabolic process"/>
    <property type="evidence" value="ECO:0007669"/>
    <property type="project" value="InterPro"/>
</dbReference>
<dbReference type="CDD" id="cd08017">
    <property type="entry name" value="M20_IAA_Hyd"/>
    <property type="match status" value="1"/>
</dbReference>
<dbReference type="FunFam" id="3.30.70.360:FF:000001">
    <property type="entry name" value="N-acetyldiaminopimelate deacetylase"/>
    <property type="match status" value="1"/>
</dbReference>
<dbReference type="Gene3D" id="3.30.70.360">
    <property type="match status" value="1"/>
</dbReference>
<dbReference type="Gene3D" id="3.40.630.10">
    <property type="entry name" value="Zn peptidases"/>
    <property type="match status" value="1"/>
</dbReference>
<dbReference type="InterPro" id="IPR017439">
    <property type="entry name" value="Amidohydrolase"/>
</dbReference>
<dbReference type="InterPro" id="IPR036264">
    <property type="entry name" value="Bact_exopeptidase_dim_dom"/>
</dbReference>
<dbReference type="InterPro" id="IPR044757">
    <property type="entry name" value="ILR1-like_Hyd"/>
</dbReference>
<dbReference type="InterPro" id="IPR002933">
    <property type="entry name" value="Peptidase_M20"/>
</dbReference>
<dbReference type="InterPro" id="IPR011650">
    <property type="entry name" value="Peptidase_M20_dimer"/>
</dbReference>
<dbReference type="NCBIfam" id="TIGR01891">
    <property type="entry name" value="amidohydrolases"/>
    <property type="match status" value="1"/>
</dbReference>
<dbReference type="PANTHER" id="PTHR11014:SF119">
    <property type="entry name" value="IAA-AMINO ACID HYDROLASE ILR1-LIKE 1"/>
    <property type="match status" value="1"/>
</dbReference>
<dbReference type="PANTHER" id="PTHR11014">
    <property type="entry name" value="PEPTIDASE M20 FAMILY MEMBER"/>
    <property type="match status" value="1"/>
</dbReference>
<dbReference type="Pfam" id="PF07687">
    <property type="entry name" value="M20_dimer"/>
    <property type="match status" value="1"/>
</dbReference>
<dbReference type="Pfam" id="PF01546">
    <property type="entry name" value="Peptidase_M20"/>
    <property type="match status" value="1"/>
</dbReference>
<dbReference type="PIRSF" id="PIRSF005962">
    <property type="entry name" value="Pept_M20D_amidohydro"/>
    <property type="match status" value="1"/>
</dbReference>
<dbReference type="SUPFAM" id="SSF55031">
    <property type="entry name" value="Bacterial exopeptidase dimerisation domain"/>
    <property type="match status" value="1"/>
</dbReference>
<dbReference type="SUPFAM" id="SSF53187">
    <property type="entry name" value="Zn-dependent exopeptidases"/>
    <property type="match status" value="1"/>
</dbReference>
<dbReference type="PROSITE" id="PS00014">
    <property type="entry name" value="ER_TARGET"/>
    <property type="match status" value="1"/>
</dbReference>